<comment type="function">
    <text evidence="1">Participates in chromosomal partition during cell division. May act via the formation of a condensin-like complex containing Smc and ScpB that pull DNA away from mid-cell into both cell halves.</text>
</comment>
<comment type="subunit">
    <text evidence="1">Component of a cohesin-like complex composed of ScpA, ScpB and the Smc homodimer, in which ScpA and ScpB bind to the head domain of Smc. The presence of the three proteins is required for the association of the complex with DNA.</text>
</comment>
<comment type="subcellular location">
    <subcellularLocation>
        <location evidence="1">Cytoplasm</location>
    </subcellularLocation>
    <text evidence="1">Associated with two foci at the outer edges of the nucleoid region in young cells, and at four foci within both cell halves in older cells.</text>
</comment>
<comment type="similarity">
    <text evidence="1">Belongs to the ScpA family.</text>
</comment>
<organism>
    <name type="scientific">Staphylococcus aureus (strain JH9)</name>
    <dbReference type="NCBI Taxonomy" id="359786"/>
    <lineage>
        <taxon>Bacteria</taxon>
        <taxon>Bacillati</taxon>
        <taxon>Bacillota</taxon>
        <taxon>Bacilli</taxon>
        <taxon>Bacillales</taxon>
        <taxon>Staphylococcaceae</taxon>
        <taxon>Staphylococcus</taxon>
    </lineage>
</organism>
<proteinExistence type="inferred from homology"/>
<dbReference type="EMBL" id="CP000703">
    <property type="protein sequence ID" value="ABQ49346.1"/>
    <property type="molecule type" value="Genomic_DNA"/>
</dbReference>
<dbReference type="RefSeq" id="WP_000273371.1">
    <property type="nucleotide sequence ID" value="NC_009487.1"/>
</dbReference>
<dbReference type="SMR" id="A5IT23"/>
<dbReference type="KEGG" id="saj:SaurJH9_1552"/>
<dbReference type="HOGENOM" id="CLU_038686_3_1_9"/>
<dbReference type="GO" id="GO:0005737">
    <property type="term" value="C:cytoplasm"/>
    <property type="evidence" value="ECO:0007669"/>
    <property type="project" value="UniProtKB-SubCell"/>
</dbReference>
<dbReference type="GO" id="GO:0051301">
    <property type="term" value="P:cell division"/>
    <property type="evidence" value="ECO:0007669"/>
    <property type="project" value="UniProtKB-KW"/>
</dbReference>
<dbReference type="GO" id="GO:0007059">
    <property type="term" value="P:chromosome segregation"/>
    <property type="evidence" value="ECO:0007669"/>
    <property type="project" value="UniProtKB-UniRule"/>
</dbReference>
<dbReference type="GO" id="GO:0006260">
    <property type="term" value="P:DNA replication"/>
    <property type="evidence" value="ECO:0007669"/>
    <property type="project" value="UniProtKB-UniRule"/>
</dbReference>
<dbReference type="Gene3D" id="6.10.250.2410">
    <property type="match status" value="1"/>
</dbReference>
<dbReference type="Gene3D" id="1.10.10.580">
    <property type="entry name" value="Structural maintenance of chromosome 1. Chain E"/>
    <property type="match status" value="1"/>
</dbReference>
<dbReference type="HAMAP" id="MF_01805">
    <property type="entry name" value="ScpA"/>
    <property type="match status" value="1"/>
</dbReference>
<dbReference type="InterPro" id="IPR003768">
    <property type="entry name" value="ScpA"/>
</dbReference>
<dbReference type="InterPro" id="IPR023093">
    <property type="entry name" value="ScpA-like_C"/>
</dbReference>
<dbReference type="PANTHER" id="PTHR33969">
    <property type="entry name" value="SEGREGATION AND CONDENSATION PROTEIN A"/>
    <property type="match status" value="1"/>
</dbReference>
<dbReference type="PANTHER" id="PTHR33969:SF2">
    <property type="entry name" value="SEGREGATION AND CONDENSATION PROTEIN A"/>
    <property type="match status" value="1"/>
</dbReference>
<dbReference type="Pfam" id="PF02616">
    <property type="entry name" value="SMC_ScpA"/>
    <property type="match status" value="1"/>
</dbReference>
<feature type="chain" id="PRO_1000088235" description="Segregation and condensation protein A">
    <location>
        <begin position="1"/>
        <end position="243"/>
    </location>
</feature>
<protein>
    <recommendedName>
        <fullName evidence="1">Segregation and condensation protein A</fullName>
    </recommendedName>
</protein>
<accession>A5IT23</accession>
<sequence>MYEVKLDAFNGPLDLLLHLIQKFEIDIYDIPMQALTEQYMQYVHAMKQLEINIASEYLVLASELLMIKSKMLLPQSTSDMDVDDDPREDLVGRLIEYQNYKEYTAILNDMKEERDFYFTKRPTDLSHLETDESWDPNHTIDLTELIVAYQRVKNRVELNTPKSVEIRKETFTIQQATEQVTSRLKDKDHFNFFSLFTFSEPIEQVVTHFLAILEMSKAGIINIEQQRNFEDINIIRGVNYHFG</sequence>
<evidence type="ECO:0000255" key="1">
    <source>
        <dbReference type="HAMAP-Rule" id="MF_01805"/>
    </source>
</evidence>
<reference key="1">
    <citation type="submission" date="2007-05" db="EMBL/GenBank/DDBJ databases">
        <title>Complete sequence of chromosome of Staphylococcus aureus subsp. aureus JH9.</title>
        <authorList>
            <consortium name="US DOE Joint Genome Institute"/>
            <person name="Copeland A."/>
            <person name="Lucas S."/>
            <person name="Lapidus A."/>
            <person name="Barry K."/>
            <person name="Detter J.C."/>
            <person name="Glavina del Rio T."/>
            <person name="Hammon N."/>
            <person name="Israni S."/>
            <person name="Pitluck S."/>
            <person name="Chain P."/>
            <person name="Malfatti S."/>
            <person name="Shin M."/>
            <person name="Vergez L."/>
            <person name="Schmutz J."/>
            <person name="Larimer F."/>
            <person name="Land M."/>
            <person name="Hauser L."/>
            <person name="Kyrpides N."/>
            <person name="Kim E."/>
            <person name="Tomasz A."/>
            <person name="Richardson P."/>
        </authorList>
    </citation>
    <scope>NUCLEOTIDE SEQUENCE [LARGE SCALE GENOMIC DNA]</scope>
    <source>
        <strain>JH9</strain>
    </source>
</reference>
<gene>
    <name evidence="1" type="primary">scpA</name>
    <name type="ordered locus">SaurJH9_1552</name>
</gene>
<name>SCPA_STAA9</name>
<keyword id="KW-0131">Cell cycle</keyword>
<keyword id="KW-0132">Cell division</keyword>
<keyword id="KW-0159">Chromosome partition</keyword>
<keyword id="KW-0963">Cytoplasm</keyword>